<sequence length="459" mass="49437">MSNRFAVILAAGKGTRMKSKLYKVLHPVCGKPMVQHVVDQVSQLGLQKLVTVVGHGAEMVQEQLGNVSEFALQAEQLGTAHAVDQAAGVLANEEGTTLVICGDTPLITAETMEALLQQHKEAGAMATVLTAYIEEPAGYGRIVRNENGHVEKIVEHKDANEKELAIKEINTGTYCFDNKALFASLSKVSNDNVQGEYYLPDVIEILKNEGHIVSAYQTEHFDETLGVNDRVALSQAEIIMKNRINRKNMVNGVTIIDPSNTYISADAIIGSDTVLHPGTIIEGNTVIGSDCEIGPHTVIRDSEIGDRTTIRQSTVHDSKLGTEVSVGPFAHIRPDSVIGDEVRVGNFVEIKKTVFGNRSKASHLSYIGDAQIGEDVNLGCGSITVNYDGKNKFKTVIGNGVFIGCNSNLVAPVTVEDGAYVAAGSTITENVPSKALSVARARQVNKEDYVDQLLNKKKS</sequence>
<accession>Q63HI4</accession>
<keyword id="KW-0012">Acyltransferase</keyword>
<keyword id="KW-0133">Cell shape</keyword>
<keyword id="KW-0961">Cell wall biogenesis/degradation</keyword>
<keyword id="KW-0963">Cytoplasm</keyword>
<keyword id="KW-0460">Magnesium</keyword>
<keyword id="KW-0479">Metal-binding</keyword>
<keyword id="KW-0511">Multifunctional enzyme</keyword>
<keyword id="KW-0548">Nucleotidyltransferase</keyword>
<keyword id="KW-0573">Peptidoglycan synthesis</keyword>
<keyword id="KW-0677">Repeat</keyword>
<keyword id="KW-0808">Transferase</keyword>
<gene>
    <name evidence="1" type="primary">glmU</name>
    <name type="ordered locus">BCE33L0044</name>
</gene>
<proteinExistence type="inferred from homology"/>
<evidence type="ECO:0000255" key="1">
    <source>
        <dbReference type="HAMAP-Rule" id="MF_01631"/>
    </source>
</evidence>
<comment type="function">
    <text evidence="1">Catalyzes the last two sequential reactions in the de novo biosynthetic pathway for UDP-N-acetylglucosamine (UDP-GlcNAc). The C-terminal domain catalyzes the transfer of acetyl group from acetyl coenzyme A to glucosamine-1-phosphate (GlcN-1-P) to produce N-acetylglucosamine-1-phosphate (GlcNAc-1-P), which is converted into UDP-GlcNAc by the transfer of uridine 5-monophosphate (from uridine 5-triphosphate), a reaction catalyzed by the N-terminal domain.</text>
</comment>
<comment type="catalytic activity">
    <reaction evidence="1">
        <text>alpha-D-glucosamine 1-phosphate + acetyl-CoA = N-acetyl-alpha-D-glucosamine 1-phosphate + CoA + H(+)</text>
        <dbReference type="Rhea" id="RHEA:13725"/>
        <dbReference type="ChEBI" id="CHEBI:15378"/>
        <dbReference type="ChEBI" id="CHEBI:57287"/>
        <dbReference type="ChEBI" id="CHEBI:57288"/>
        <dbReference type="ChEBI" id="CHEBI:57776"/>
        <dbReference type="ChEBI" id="CHEBI:58516"/>
        <dbReference type="EC" id="2.3.1.157"/>
    </reaction>
</comment>
<comment type="catalytic activity">
    <reaction evidence="1">
        <text>N-acetyl-alpha-D-glucosamine 1-phosphate + UTP + H(+) = UDP-N-acetyl-alpha-D-glucosamine + diphosphate</text>
        <dbReference type="Rhea" id="RHEA:13509"/>
        <dbReference type="ChEBI" id="CHEBI:15378"/>
        <dbReference type="ChEBI" id="CHEBI:33019"/>
        <dbReference type="ChEBI" id="CHEBI:46398"/>
        <dbReference type="ChEBI" id="CHEBI:57705"/>
        <dbReference type="ChEBI" id="CHEBI:57776"/>
        <dbReference type="EC" id="2.7.7.23"/>
    </reaction>
</comment>
<comment type="cofactor">
    <cofactor evidence="1">
        <name>Mg(2+)</name>
        <dbReference type="ChEBI" id="CHEBI:18420"/>
    </cofactor>
    <text evidence="1">Binds 1 Mg(2+) ion per subunit.</text>
</comment>
<comment type="pathway">
    <text evidence="1">Nucleotide-sugar biosynthesis; UDP-N-acetyl-alpha-D-glucosamine biosynthesis; N-acetyl-alpha-D-glucosamine 1-phosphate from alpha-D-glucosamine 6-phosphate (route II): step 2/2.</text>
</comment>
<comment type="pathway">
    <text evidence="1">Nucleotide-sugar biosynthesis; UDP-N-acetyl-alpha-D-glucosamine biosynthesis; UDP-N-acetyl-alpha-D-glucosamine from N-acetyl-alpha-D-glucosamine 1-phosphate: step 1/1.</text>
</comment>
<comment type="pathway">
    <text evidence="1">Bacterial outer membrane biogenesis; LPS lipid A biosynthesis.</text>
</comment>
<comment type="subunit">
    <text evidence="1">Homotrimer.</text>
</comment>
<comment type="subcellular location">
    <subcellularLocation>
        <location evidence="1">Cytoplasm</location>
    </subcellularLocation>
</comment>
<comment type="similarity">
    <text evidence="1">In the N-terminal section; belongs to the N-acetylglucosamine-1-phosphate uridyltransferase family.</text>
</comment>
<comment type="similarity">
    <text evidence="1">In the C-terminal section; belongs to the transferase hexapeptide repeat family.</text>
</comment>
<name>GLMU_BACCZ</name>
<protein>
    <recommendedName>
        <fullName evidence="1">Bifunctional protein GlmU</fullName>
    </recommendedName>
    <domain>
        <recommendedName>
            <fullName evidence="1">UDP-N-acetylglucosamine pyrophosphorylase</fullName>
            <ecNumber evidence="1">2.7.7.23</ecNumber>
        </recommendedName>
        <alternativeName>
            <fullName evidence="1">N-acetylglucosamine-1-phosphate uridyltransferase</fullName>
        </alternativeName>
    </domain>
    <domain>
        <recommendedName>
            <fullName evidence="1">Glucosamine-1-phosphate N-acetyltransferase</fullName>
            <ecNumber evidence="1">2.3.1.157</ecNumber>
        </recommendedName>
    </domain>
</protein>
<feature type="chain" id="PRO_0000233729" description="Bifunctional protein GlmU">
    <location>
        <begin position="1"/>
        <end position="459"/>
    </location>
</feature>
<feature type="region of interest" description="Pyrophosphorylase" evidence="1">
    <location>
        <begin position="1"/>
        <end position="230"/>
    </location>
</feature>
<feature type="region of interest" description="Linker" evidence="1">
    <location>
        <begin position="231"/>
        <end position="251"/>
    </location>
</feature>
<feature type="region of interest" description="N-acetyltransferase" evidence="1">
    <location>
        <begin position="252"/>
        <end position="459"/>
    </location>
</feature>
<feature type="active site" description="Proton acceptor" evidence="1">
    <location>
        <position position="363"/>
    </location>
</feature>
<feature type="binding site" evidence="1">
    <location>
        <begin position="9"/>
        <end position="12"/>
    </location>
    <ligand>
        <name>UDP-N-acetyl-alpha-D-glucosamine</name>
        <dbReference type="ChEBI" id="CHEBI:57705"/>
    </ligand>
</feature>
<feature type="binding site" evidence="1">
    <location>
        <position position="23"/>
    </location>
    <ligand>
        <name>UDP-N-acetyl-alpha-D-glucosamine</name>
        <dbReference type="ChEBI" id="CHEBI:57705"/>
    </ligand>
</feature>
<feature type="binding site" evidence="1">
    <location>
        <position position="73"/>
    </location>
    <ligand>
        <name>UDP-N-acetyl-alpha-D-glucosamine</name>
        <dbReference type="ChEBI" id="CHEBI:57705"/>
    </ligand>
</feature>
<feature type="binding site" evidence="1">
    <location>
        <begin position="78"/>
        <end position="79"/>
    </location>
    <ligand>
        <name>UDP-N-acetyl-alpha-D-glucosamine</name>
        <dbReference type="ChEBI" id="CHEBI:57705"/>
    </ligand>
</feature>
<feature type="binding site" evidence="1">
    <location>
        <position position="103"/>
    </location>
    <ligand>
        <name>Mg(2+)</name>
        <dbReference type="ChEBI" id="CHEBI:18420"/>
    </ligand>
</feature>
<feature type="binding site" evidence="1">
    <location>
        <position position="140"/>
    </location>
    <ligand>
        <name>UDP-N-acetyl-alpha-D-glucosamine</name>
        <dbReference type="ChEBI" id="CHEBI:57705"/>
    </ligand>
</feature>
<feature type="binding site" evidence="1">
    <location>
        <position position="155"/>
    </location>
    <ligand>
        <name>UDP-N-acetyl-alpha-D-glucosamine</name>
        <dbReference type="ChEBI" id="CHEBI:57705"/>
    </ligand>
</feature>
<feature type="binding site" evidence="1">
    <location>
        <position position="170"/>
    </location>
    <ligand>
        <name>UDP-N-acetyl-alpha-D-glucosamine</name>
        <dbReference type="ChEBI" id="CHEBI:57705"/>
    </ligand>
</feature>
<feature type="binding site" evidence="1">
    <location>
        <position position="228"/>
    </location>
    <ligand>
        <name>Mg(2+)</name>
        <dbReference type="ChEBI" id="CHEBI:18420"/>
    </ligand>
</feature>
<feature type="binding site" evidence="1">
    <location>
        <position position="228"/>
    </location>
    <ligand>
        <name>UDP-N-acetyl-alpha-D-glucosamine</name>
        <dbReference type="ChEBI" id="CHEBI:57705"/>
    </ligand>
</feature>
<feature type="binding site" evidence="1">
    <location>
        <position position="333"/>
    </location>
    <ligand>
        <name>UDP-N-acetyl-alpha-D-glucosamine</name>
        <dbReference type="ChEBI" id="CHEBI:57705"/>
    </ligand>
</feature>
<feature type="binding site" evidence="1">
    <location>
        <position position="351"/>
    </location>
    <ligand>
        <name>UDP-N-acetyl-alpha-D-glucosamine</name>
        <dbReference type="ChEBI" id="CHEBI:57705"/>
    </ligand>
</feature>
<feature type="binding site" evidence="1">
    <location>
        <position position="366"/>
    </location>
    <ligand>
        <name>UDP-N-acetyl-alpha-D-glucosamine</name>
        <dbReference type="ChEBI" id="CHEBI:57705"/>
    </ligand>
</feature>
<feature type="binding site" evidence="1">
    <location>
        <position position="377"/>
    </location>
    <ligand>
        <name>UDP-N-acetyl-alpha-D-glucosamine</name>
        <dbReference type="ChEBI" id="CHEBI:57705"/>
    </ligand>
</feature>
<feature type="binding site" evidence="1">
    <location>
        <begin position="386"/>
        <end position="387"/>
    </location>
    <ligand>
        <name>acetyl-CoA</name>
        <dbReference type="ChEBI" id="CHEBI:57288"/>
    </ligand>
</feature>
<feature type="binding site" evidence="1">
    <location>
        <position position="423"/>
    </location>
    <ligand>
        <name>acetyl-CoA</name>
        <dbReference type="ChEBI" id="CHEBI:57288"/>
    </ligand>
</feature>
<feature type="binding site" evidence="1">
    <location>
        <position position="440"/>
    </location>
    <ligand>
        <name>acetyl-CoA</name>
        <dbReference type="ChEBI" id="CHEBI:57288"/>
    </ligand>
</feature>
<organism>
    <name type="scientific">Bacillus cereus (strain ZK / E33L)</name>
    <dbReference type="NCBI Taxonomy" id="288681"/>
    <lineage>
        <taxon>Bacteria</taxon>
        <taxon>Bacillati</taxon>
        <taxon>Bacillota</taxon>
        <taxon>Bacilli</taxon>
        <taxon>Bacillales</taxon>
        <taxon>Bacillaceae</taxon>
        <taxon>Bacillus</taxon>
        <taxon>Bacillus cereus group</taxon>
    </lineage>
</organism>
<reference key="1">
    <citation type="journal article" date="2006" name="J. Bacteriol.">
        <title>Pathogenomic sequence analysis of Bacillus cereus and Bacillus thuringiensis isolates closely related to Bacillus anthracis.</title>
        <authorList>
            <person name="Han C.S."/>
            <person name="Xie G."/>
            <person name="Challacombe J.F."/>
            <person name="Altherr M.R."/>
            <person name="Bhotika S.S."/>
            <person name="Bruce D."/>
            <person name="Campbell C.S."/>
            <person name="Campbell M.L."/>
            <person name="Chen J."/>
            <person name="Chertkov O."/>
            <person name="Cleland C."/>
            <person name="Dimitrijevic M."/>
            <person name="Doggett N.A."/>
            <person name="Fawcett J.J."/>
            <person name="Glavina T."/>
            <person name="Goodwin L.A."/>
            <person name="Hill K.K."/>
            <person name="Hitchcock P."/>
            <person name="Jackson P.J."/>
            <person name="Keim P."/>
            <person name="Kewalramani A.R."/>
            <person name="Longmire J."/>
            <person name="Lucas S."/>
            <person name="Malfatti S."/>
            <person name="McMurry K."/>
            <person name="Meincke L.J."/>
            <person name="Misra M."/>
            <person name="Moseman B.L."/>
            <person name="Mundt M."/>
            <person name="Munk A.C."/>
            <person name="Okinaka R.T."/>
            <person name="Parson-Quintana B."/>
            <person name="Reilly L.P."/>
            <person name="Richardson P."/>
            <person name="Robinson D.L."/>
            <person name="Rubin E."/>
            <person name="Saunders E."/>
            <person name="Tapia R."/>
            <person name="Tesmer J.G."/>
            <person name="Thayer N."/>
            <person name="Thompson L.S."/>
            <person name="Tice H."/>
            <person name="Ticknor L.O."/>
            <person name="Wills P.L."/>
            <person name="Brettin T.S."/>
            <person name="Gilna P."/>
        </authorList>
    </citation>
    <scope>NUCLEOTIDE SEQUENCE [LARGE SCALE GENOMIC DNA]</scope>
    <source>
        <strain>ZK / E33L</strain>
    </source>
</reference>
<dbReference type="EC" id="2.7.7.23" evidence="1"/>
<dbReference type="EC" id="2.3.1.157" evidence="1"/>
<dbReference type="EMBL" id="CP000001">
    <property type="protein sequence ID" value="AAU20188.1"/>
    <property type="molecule type" value="Genomic_DNA"/>
</dbReference>
<dbReference type="RefSeq" id="WP_000071031.1">
    <property type="nucleotide sequence ID" value="NZ_CP009968.1"/>
</dbReference>
<dbReference type="SMR" id="Q63HI4"/>
<dbReference type="KEGG" id="bcz:BCE33L0044"/>
<dbReference type="PATRIC" id="fig|288681.22.peg.109"/>
<dbReference type="UniPathway" id="UPA00113">
    <property type="reaction ID" value="UER00532"/>
</dbReference>
<dbReference type="UniPathway" id="UPA00113">
    <property type="reaction ID" value="UER00533"/>
</dbReference>
<dbReference type="UniPathway" id="UPA00973"/>
<dbReference type="Proteomes" id="UP000002612">
    <property type="component" value="Chromosome"/>
</dbReference>
<dbReference type="GO" id="GO:0005737">
    <property type="term" value="C:cytoplasm"/>
    <property type="evidence" value="ECO:0007669"/>
    <property type="project" value="UniProtKB-SubCell"/>
</dbReference>
<dbReference type="GO" id="GO:0016020">
    <property type="term" value="C:membrane"/>
    <property type="evidence" value="ECO:0007669"/>
    <property type="project" value="GOC"/>
</dbReference>
<dbReference type="GO" id="GO:0019134">
    <property type="term" value="F:glucosamine-1-phosphate N-acetyltransferase activity"/>
    <property type="evidence" value="ECO:0007669"/>
    <property type="project" value="UniProtKB-UniRule"/>
</dbReference>
<dbReference type="GO" id="GO:0000287">
    <property type="term" value="F:magnesium ion binding"/>
    <property type="evidence" value="ECO:0007669"/>
    <property type="project" value="UniProtKB-UniRule"/>
</dbReference>
<dbReference type="GO" id="GO:0003977">
    <property type="term" value="F:UDP-N-acetylglucosamine diphosphorylase activity"/>
    <property type="evidence" value="ECO:0007669"/>
    <property type="project" value="UniProtKB-UniRule"/>
</dbReference>
<dbReference type="GO" id="GO:0000902">
    <property type="term" value="P:cell morphogenesis"/>
    <property type="evidence" value="ECO:0007669"/>
    <property type="project" value="UniProtKB-UniRule"/>
</dbReference>
<dbReference type="GO" id="GO:0071555">
    <property type="term" value="P:cell wall organization"/>
    <property type="evidence" value="ECO:0007669"/>
    <property type="project" value="UniProtKB-KW"/>
</dbReference>
<dbReference type="GO" id="GO:0009245">
    <property type="term" value="P:lipid A biosynthetic process"/>
    <property type="evidence" value="ECO:0007669"/>
    <property type="project" value="UniProtKB-UniRule"/>
</dbReference>
<dbReference type="GO" id="GO:0009252">
    <property type="term" value="P:peptidoglycan biosynthetic process"/>
    <property type="evidence" value="ECO:0007669"/>
    <property type="project" value="UniProtKB-UniRule"/>
</dbReference>
<dbReference type="GO" id="GO:0008360">
    <property type="term" value="P:regulation of cell shape"/>
    <property type="evidence" value="ECO:0007669"/>
    <property type="project" value="UniProtKB-KW"/>
</dbReference>
<dbReference type="GO" id="GO:0006048">
    <property type="term" value="P:UDP-N-acetylglucosamine biosynthetic process"/>
    <property type="evidence" value="ECO:0007669"/>
    <property type="project" value="UniProtKB-UniPathway"/>
</dbReference>
<dbReference type="CDD" id="cd02540">
    <property type="entry name" value="GT2_GlmU_N_bac"/>
    <property type="match status" value="1"/>
</dbReference>
<dbReference type="CDD" id="cd03353">
    <property type="entry name" value="LbH_GlmU_C"/>
    <property type="match status" value="1"/>
</dbReference>
<dbReference type="FunFam" id="2.160.10.10:FF:000016">
    <property type="entry name" value="Bifunctional protein GlmU"/>
    <property type="match status" value="1"/>
</dbReference>
<dbReference type="FunFam" id="3.90.550.10:FF:000006">
    <property type="entry name" value="Bifunctional protein GlmU"/>
    <property type="match status" value="1"/>
</dbReference>
<dbReference type="Gene3D" id="2.160.10.10">
    <property type="entry name" value="Hexapeptide repeat proteins"/>
    <property type="match status" value="1"/>
</dbReference>
<dbReference type="Gene3D" id="3.90.550.10">
    <property type="entry name" value="Spore Coat Polysaccharide Biosynthesis Protein SpsA, Chain A"/>
    <property type="match status" value="1"/>
</dbReference>
<dbReference type="HAMAP" id="MF_01631">
    <property type="entry name" value="GlmU"/>
    <property type="match status" value="1"/>
</dbReference>
<dbReference type="InterPro" id="IPR005882">
    <property type="entry name" value="Bifunctional_GlmU"/>
</dbReference>
<dbReference type="InterPro" id="IPR050065">
    <property type="entry name" value="GlmU-like"/>
</dbReference>
<dbReference type="InterPro" id="IPR038009">
    <property type="entry name" value="GlmU_C_LbH"/>
</dbReference>
<dbReference type="InterPro" id="IPR001451">
    <property type="entry name" value="Hexapep"/>
</dbReference>
<dbReference type="InterPro" id="IPR018357">
    <property type="entry name" value="Hexapep_transf_CS"/>
</dbReference>
<dbReference type="InterPro" id="IPR005835">
    <property type="entry name" value="NTP_transferase_dom"/>
</dbReference>
<dbReference type="InterPro" id="IPR029044">
    <property type="entry name" value="Nucleotide-diphossugar_trans"/>
</dbReference>
<dbReference type="InterPro" id="IPR011004">
    <property type="entry name" value="Trimer_LpxA-like_sf"/>
</dbReference>
<dbReference type="NCBIfam" id="TIGR01173">
    <property type="entry name" value="glmU"/>
    <property type="match status" value="1"/>
</dbReference>
<dbReference type="NCBIfam" id="NF010934">
    <property type="entry name" value="PRK14354.1"/>
    <property type="match status" value="1"/>
</dbReference>
<dbReference type="PANTHER" id="PTHR43584:SF3">
    <property type="entry name" value="BIFUNCTIONAL PROTEIN GLMU"/>
    <property type="match status" value="1"/>
</dbReference>
<dbReference type="PANTHER" id="PTHR43584">
    <property type="entry name" value="NUCLEOTIDYL TRANSFERASE"/>
    <property type="match status" value="1"/>
</dbReference>
<dbReference type="Pfam" id="PF00132">
    <property type="entry name" value="Hexapep"/>
    <property type="match status" value="3"/>
</dbReference>
<dbReference type="Pfam" id="PF00483">
    <property type="entry name" value="NTP_transferase"/>
    <property type="match status" value="1"/>
</dbReference>
<dbReference type="SUPFAM" id="SSF53448">
    <property type="entry name" value="Nucleotide-diphospho-sugar transferases"/>
    <property type="match status" value="1"/>
</dbReference>
<dbReference type="SUPFAM" id="SSF51161">
    <property type="entry name" value="Trimeric LpxA-like enzymes"/>
    <property type="match status" value="1"/>
</dbReference>
<dbReference type="PROSITE" id="PS00101">
    <property type="entry name" value="HEXAPEP_TRANSFERASES"/>
    <property type="match status" value="1"/>
</dbReference>